<comment type="function">
    <text evidence="1 2">Attaches a phycocyanobilin (PCB) chromophore to 'Cys-82' of the C-phycocyanain beta subunit (PhcB) and the unique PCB that is attached to allophycocyanin alpha and beta subunits (ApcA and ApcB). In vitro, and probably also in vivo, chromophorylates ApcD and ApcF.</text>
</comment>
<comment type="subunit">
    <text>Forms a heterodimer with CpcU.</text>
</comment>
<comment type="disruption phenotype">
    <text evidence="2">Cells are a yellow color, 70% reduction in phycobiliproteins, grow slowly, have an increased sensitivity to high light and a long lag phase. The C-phycocyanin beta subunit (PhcB) in this strain is missing the phycocyanobilin chromophore on 'Cys-82'.</text>
</comment>
<comment type="similarity">
    <text evidence="3">Belongs to the CpcS/CpeS biliprotein lyase family.</text>
</comment>
<dbReference type="EC" id="4.-.-.-"/>
<dbReference type="EMBL" id="EU145731">
    <property type="protein sequence ID" value="ABV80281.1"/>
    <property type="molecule type" value="Genomic_DNA"/>
</dbReference>
<dbReference type="EMBL" id="CP000951">
    <property type="protein sequence ID" value="ACA99810.1"/>
    <property type="molecule type" value="Genomic_DNA"/>
</dbReference>
<dbReference type="RefSeq" id="WP_012307433.1">
    <property type="nucleotide sequence ID" value="NZ_JAHHPU010000002.1"/>
</dbReference>
<dbReference type="SMR" id="A8HTM2"/>
<dbReference type="STRING" id="32049.SYNPCC7002_A1822"/>
<dbReference type="KEGG" id="syp:SYNPCC7002_A1822"/>
<dbReference type="eggNOG" id="ENOG502Z8E6">
    <property type="taxonomic scope" value="Bacteria"/>
</dbReference>
<dbReference type="HOGENOM" id="CLU_096258_0_0_3"/>
<dbReference type="BRENDA" id="4.4.1.29">
    <property type="organism ID" value="6187"/>
</dbReference>
<dbReference type="Proteomes" id="UP000001688">
    <property type="component" value="Chromosome"/>
</dbReference>
<dbReference type="GO" id="GO:0016829">
    <property type="term" value="F:lyase activity"/>
    <property type="evidence" value="ECO:0007669"/>
    <property type="project" value="UniProtKB-KW"/>
</dbReference>
<dbReference type="GO" id="GO:0017009">
    <property type="term" value="P:protein-phycocyanobilin linkage"/>
    <property type="evidence" value="ECO:0000314"/>
    <property type="project" value="UniProtKB"/>
</dbReference>
<dbReference type="CDD" id="cd19433">
    <property type="entry name" value="lipocalin_CpcS-CpeS"/>
    <property type="match status" value="1"/>
</dbReference>
<dbReference type="FunFam" id="2.40.128.20:FF:000037">
    <property type="entry name" value="Chromophore lyase CpcS/CpeS"/>
    <property type="match status" value="1"/>
</dbReference>
<dbReference type="Gene3D" id="2.40.128.20">
    <property type="match status" value="1"/>
</dbReference>
<dbReference type="HAMAP" id="MF_01459">
    <property type="entry name" value="Chrphore_lyase_CpxS"/>
    <property type="match status" value="1"/>
</dbReference>
<dbReference type="InterPro" id="IPR012674">
    <property type="entry name" value="Calycin"/>
</dbReference>
<dbReference type="InterPro" id="IPR018536">
    <property type="entry name" value="CpcS/CpeS"/>
</dbReference>
<dbReference type="Pfam" id="PF09367">
    <property type="entry name" value="CpeS"/>
    <property type="match status" value="1"/>
</dbReference>
<proteinExistence type="evidence at protein level"/>
<accession>A8HTM2</accession>
<name>CPCS_PICP2</name>
<reference key="1">
    <citation type="journal article" date="2008" name="J. Biol. Chem.">
        <title>Biogenesis of phycobiliproteins: I. cpcS-I and cpcU mutants of the cyanobacterium Synechococcus sp. PCC 7002 define a heterodimeric phyococyanobilin lyase specific for beta-phycocyanin and allophycocyanin subunits.</title>
        <authorList>
            <person name="Shen G."/>
            <person name="Schluchter W.M."/>
            <person name="Bryant D.A."/>
        </authorList>
    </citation>
    <scope>NUCLEOTIDE SEQUENCE [GENOMIC DNA]</scope>
    <scope>POSSIBLE SUBUNIT</scope>
    <scope>FUNCTION IN CHROMOPHORE ATTACHMENT</scope>
    <scope>DISRUPTION PHENOTYPE</scope>
    <source>
        <strain>ATCC 27264 / PCC 7002 / PR-6</strain>
    </source>
</reference>
<reference key="2">
    <citation type="submission" date="2008-02" db="EMBL/GenBank/DDBJ databases">
        <title>Complete sequence of Synechococcus sp. PCC 7002.</title>
        <authorList>
            <person name="Li T."/>
            <person name="Zhao J."/>
            <person name="Zhao C."/>
            <person name="Liu Z."/>
            <person name="Zhao F."/>
            <person name="Marquardt J."/>
            <person name="Nomura C.T."/>
            <person name="Persson S."/>
            <person name="Detter J.C."/>
            <person name="Richardson P.M."/>
            <person name="Lanz C."/>
            <person name="Schuster S.C."/>
            <person name="Wang J."/>
            <person name="Li S."/>
            <person name="Huang X."/>
            <person name="Cai T."/>
            <person name="Yu Z."/>
            <person name="Luo J."/>
            <person name="Zhao J."/>
            <person name="Bryant D.A."/>
        </authorList>
    </citation>
    <scope>NUCLEOTIDE SEQUENCE [LARGE SCALE GENOMIC DNA]</scope>
    <source>
        <strain>ATCC 27264 / PCC 7002 / PR-6</strain>
    </source>
</reference>
<reference key="3">
    <citation type="journal article" date="2008" name="J. Biol. Chem.">
        <title>Biogenesis of phycobiliproteins: II. CpcS-I and CpcU comprise the heterodimeric bilin lyase that attaches phycocyanobilin to Cys-82 of beta-phycocyanin and CYS-81 of allophycocyanin subunits in Synechococcus sp. PCC 7002.</title>
        <authorList>
            <person name="Saunee N.A."/>
            <person name="Williams S.R."/>
            <person name="Bryant D.A."/>
            <person name="Schluchter W.M."/>
        </authorList>
    </citation>
    <scope>FUNCTION IN CHROMOPHORE ATTACHMENT</scope>
    <scope>INTERACTION WITH CPCU</scope>
    <source>
        <strain>ATCC 27264 / PCC 7002 / PR-6</strain>
    </source>
</reference>
<reference key="4">
    <citation type="journal article" date="2010" name="Appl. Environ. Microbiol.">
        <title>Biosynthesis of cyanobacterial phycobiliproteins in Escherichia coli: chromophorylation efficiency and specificity of all bilin lyases from Synechococcus sp. strain PCC 7002.</title>
        <authorList>
            <person name="Biswas A."/>
            <person name="Vasquez Y.M."/>
            <person name="Dragomani T.M."/>
            <person name="Kronfel M.L."/>
            <person name="Williams S.R."/>
            <person name="Alvey R.M."/>
            <person name="Bryant D.A."/>
            <person name="Schluchter W.M."/>
        </authorList>
    </citation>
    <scope>PROTEIN SUBSTRATES</scope>
    <scope>INTERACTION WITH CPCU</scope>
    <source>
        <strain>ATCC 27264 / PCC 7002 / PR-6</strain>
    </source>
</reference>
<protein>
    <recommendedName>
        <fullName>Phycocyanobilin lyase subunit CpcS</fullName>
        <ecNumber>4.-.-.-</ecNumber>
    </recommendedName>
</protein>
<evidence type="ECO:0000269" key="1">
    <source>
    </source>
</evidence>
<evidence type="ECO:0000269" key="2">
    <source>
    </source>
</evidence>
<evidence type="ECO:0000305" key="3"/>
<feature type="chain" id="PRO_0000403139" description="Phycocyanobilin lyase subunit CpcS">
    <location>
        <begin position="1"/>
        <end position="198"/>
    </location>
</feature>
<organism>
    <name type="scientific">Picosynechococcus sp. (strain ATCC 27264 / PCC 7002 / PR-6)</name>
    <name type="common">Agmenellum quadruplicatum</name>
    <dbReference type="NCBI Taxonomy" id="32049"/>
    <lineage>
        <taxon>Bacteria</taxon>
        <taxon>Bacillati</taxon>
        <taxon>Cyanobacteriota</taxon>
        <taxon>Cyanophyceae</taxon>
        <taxon>Oscillatoriophycideae</taxon>
        <taxon>Chroococcales</taxon>
        <taxon>Geminocystaceae</taxon>
        <taxon>Picosynechococcus</taxon>
    </lineage>
</organism>
<keyword id="KW-0456">Lyase</keyword>
<keyword id="KW-1185">Reference proteome</keyword>
<sequence>MQSFADAKEFFQYSAGQWQSRRVTHHLPFRRAESGGSNIQVETLEKDDPRIIEICQMHDMDASLSVGGSYVTWAGTMQWDKDDENHEGSTVFALIPDADNPRQGKLLRERGYAEIVPVAGEYHLDHEDGLVLTTEYETMTIYERFWFANPDLRLRTSTVKRFGGFNTTTFCMEERIQTSPVTATAAAETNPLYAISGW</sequence>
<gene>
    <name type="primary">cpcS</name>
    <name type="synonym">cpcS-I</name>
    <name type="ordered locus">SYNPCC7002_A1822</name>
</gene>